<comment type="function">
    <text evidence="1">Redox regulated molecular chaperone. Protects both thermally unfolding and oxidatively damaged proteins from irreversible aggregation. Plays an important role in the bacterial defense system toward oxidative stress.</text>
</comment>
<comment type="subcellular location">
    <subcellularLocation>
        <location evidence="1">Cytoplasm</location>
    </subcellularLocation>
</comment>
<comment type="PTM">
    <text evidence="1">Under oxidizing conditions two disulfide bonds are formed involving the reactive cysteines. Under reducing conditions zinc is bound to the reactive cysteines and the protein is inactive.</text>
</comment>
<comment type="similarity">
    <text evidence="1">Belongs to the HSP33 family.</text>
</comment>
<feature type="chain" id="PRO_1000015574" description="33 kDa chaperonin">
    <location>
        <begin position="1"/>
        <end position="289"/>
    </location>
</feature>
<feature type="disulfide bond" description="Redox-active" evidence="1">
    <location>
        <begin position="230"/>
        <end position="232"/>
    </location>
</feature>
<feature type="disulfide bond" description="Redox-active" evidence="1">
    <location>
        <begin position="263"/>
        <end position="266"/>
    </location>
</feature>
<organism>
    <name type="scientific">Shigella flexneri</name>
    <dbReference type="NCBI Taxonomy" id="623"/>
    <lineage>
        <taxon>Bacteria</taxon>
        <taxon>Pseudomonadati</taxon>
        <taxon>Pseudomonadota</taxon>
        <taxon>Gammaproteobacteria</taxon>
        <taxon>Enterobacterales</taxon>
        <taxon>Enterobacteriaceae</taxon>
        <taxon>Shigella</taxon>
    </lineage>
</organism>
<gene>
    <name evidence="1" type="primary">hslO</name>
    <name type="ordered locus">SF3419</name>
    <name type="ordered locus">S4343</name>
</gene>
<reference key="1">
    <citation type="journal article" date="2002" name="Nucleic Acids Res.">
        <title>Genome sequence of Shigella flexneri 2a: insights into pathogenicity through comparison with genomes of Escherichia coli K12 and O157.</title>
        <authorList>
            <person name="Jin Q."/>
            <person name="Yuan Z."/>
            <person name="Xu J."/>
            <person name="Wang Y."/>
            <person name="Shen Y."/>
            <person name="Lu W."/>
            <person name="Wang J."/>
            <person name="Liu H."/>
            <person name="Yang J."/>
            <person name="Yang F."/>
            <person name="Zhang X."/>
            <person name="Zhang J."/>
            <person name="Yang G."/>
            <person name="Wu H."/>
            <person name="Qu D."/>
            <person name="Dong J."/>
            <person name="Sun L."/>
            <person name="Xue Y."/>
            <person name="Zhao A."/>
            <person name="Gao Y."/>
            <person name="Zhu J."/>
            <person name="Kan B."/>
            <person name="Ding K."/>
            <person name="Chen S."/>
            <person name="Cheng H."/>
            <person name="Yao Z."/>
            <person name="He B."/>
            <person name="Chen R."/>
            <person name="Ma D."/>
            <person name="Qiang B."/>
            <person name="Wen Y."/>
            <person name="Hou Y."/>
            <person name="Yu J."/>
        </authorList>
    </citation>
    <scope>NUCLEOTIDE SEQUENCE [LARGE SCALE GENOMIC DNA]</scope>
    <source>
        <strain>301 / Serotype 2a</strain>
    </source>
</reference>
<reference key="2">
    <citation type="journal article" date="2003" name="Infect. Immun.">
        <title>Complete genome sequence and comparative genomics of Shigella flexneri serotype 2a strain 2457T.</title>
        <authorList>
            <person name="Wei J."/>
            <person name="Goldberg M.B."/>
            <person name="Burland V."/>
            <person name="Venkatesan M.M."/>
            <person name="Deng W."/>
            <person name="Fournier G."/>
            <person name="Mayhew G.F."/>
            <person name="Plunkett G. III"/>
            <person name="Rose D.J."/>
            <person name="Darling A."/>
            <person name="Mau B."/>
            <person name="Perna N.T."/>
            <person name="Payne S.M."/>
            <person name="Runyen-Janecky L.J."/>
            <person name="Zhou S."/>
            <person name="Schwartz D.C."/>
            <person name="Blattner F.R."/>
        </authorList>
    </citation>
    <scope>NUCLEOTIDE SEQUENCE [LARGE SCALE GENOMIC DNA]</scope>
    <source>
        <strain>ATCC 700930 / 2457T / Serotype 2a</strain>
    </source>
</reference>
<sequence>MPQHDQLHRYLFENFAVRGELVTVSETLQQILENHDYPQPVKNVLAELLVATSLLTATLKFDGDITVQLQGDGPMNLAVINGNNNQQMRGVARVQGEIPENADLKTLVGNGYVVITITPSEGERYQGVVGLEGDTLAACLEDYFMRSEQLPTRLFIRTGDVDGKPAAGGMLLQVMPAQNTQQDDFDHLATLTETIKTEELLTLPANEVLWRLYHEEEVTVYDPQDVEFKCTCSRERCADALKTLPDEEVDSILAEDGEIDMHCDYCGNHYLFNAMDIAEIRNNASPADP</sequence>
<dbReference type="EMBL" id="AE005674">
    <property type="protein sequence ID" value="AAN44880.2"/>
    <property type="molecule type" value="Genomic_DNA"/>
</dbReference>
<dbReference type="EMBL" id="AE014073">
    <property type="protein sequence ID" value="AAP19298.1"/>
    <property type="molecule type" value="Genomic_DNA"/>
</dbReference>
<dbReference type="RefSeq" id="NP_709173.2">
    <property type="nucleotide sequence ID" value="NC_004337.2"/>
</dbReference>
<dbReference type="RefSeq" id="WP_005052722.1">
    <property type="nucleotide sequence ID" value="NZ_WPGW01000003.1"/>
</dbReference>
<dbReference type="SMR" id="Q83J98"/>
<dbReference type="STRING" id="198214.SF3419"/>
<dbReference type="PaxDb" id="198214-SF3419"/>
<dbReference type="GeneID" id="1026490"/>
<dbReference type="KEGG" id="sfl:SF3419"/>
<dbReference type="KEGG" id="sfx:S4343"/>
<dbReference type="PATRIC" id="fig|198214.7.peg.4035"/>
<dbReference type="HOGENOM" id="CLU_054493_0_0_6"/>
<dbReference type="Proteomes" id="UP000001006">
    <property type="component" value="Chromosome"/>
</dbReference>
<dbReference type="Proteomes" id="UP000002673">
    <property type="component" value="Chromosome"/>
</dbReference>
<dbReference type="GO" id="GO:0005737">
    <property type="term" value="C:cytoplasm"/>
    <property type="evidence" value="ECO:0007669"/>
    <property type="project" value="UniProtKB-SubCell"/>
</dbReference>
<dbReference type="GO" id="GO:0044183">
    <property type="term" value="F:protein folding chaperone"/>
    <property type="evidence" value="ECO:0007669"/>
    <property type="project" value="TreeGrafter"/>
</dbReference>
<dbReference type="GO" id="GO:0051082">
    <property type="term" value="F:unfolded protein binding"/>
    <property type="evidence" value="ECO:0007669"/>
    <property type="project" value="UniProtKB-UniRule"/>
</dbReference>
<dbReference type="GO" id="GO:0042026">
    <property type="term" value="P:protein refolding"/>
    <property type="evidence" value="ECO:0007669"/>
    <property type="project" value="TreeGrafter"/>
</dbReference>
<dbReference type="CDD" id="cd00498">
    <property type="entry name" value="Hsp33"/>
    <property type="match status" value="1"/>
</dbReference>
<dbReference type="FunFam" id="3.55.30.10:FF:000001">
    <property type="entry name" value="33 kDa chaperonin"/>
    <property type="match status" value="1"/>
</dbReference>
<dbReference type="Gene3D" id="1.10.287.480">
    <property type="entry name" value="helix hairpin bin"/>
    <property type="match status" value="1"/>
</dbReference>
<dbReference type="Gene3D" id="3.55.30.10">
    <property type="entry name" value="Hsp33 domain"/>
    <property type="match status" value="1"/>
</dbReference>
<dbReference type="Gene3D" id="3.90.1280.10">
    <property type="entry name" value="HSP33 redox switch-like"/>
    <property type="match status" value="1"/>
</dbReference>
<dbReference type="HAMAP" id="MF_00117">
    <property type="entry name" value="HslO"/>
    <property type="match status" value="1"/>
</dbReference>
<dbReference type="InterPro" id="IPR000397">
    <property type="entry name" value="Heat_shock_Hsp33"/>
</dbReference>
<dbReference type="InterPro" id="IPR016154">
    <property type="entry name" value="Heat_shock_Hsp33_C"/>
</dbReference>
<dbReference type="InterPro" id="IPR016153">
    <property type="entry name" value="Heat_shock_Hsp33_N"/>
</dbReference>
<dbReference type="InterPro" id="IPR023212">
    <property type="entry name" value="Hsp33_helix_hairpin_bin_dom_sf"/>
</dbReference>
<dbReference type="NCBIfam" id="NF001033">
    <property type="entry name" value="PRK00114.1"/>
    <property type="match status" value="1"/>
</dbReference>
<dbReference type="PANTHER" id="PTHR30111">
    <property type="entry name" value="33 KDA CHAPERONIN"/>
    <property type="match status" value="1"/>
</dbReference>
<dbReference type="PANTHER" id="PTHR30111:SF1">
    <property type="entry name" value="33 KDA CHAPERONIN"/>
    <property type="match status" value="1"/>
</dbReference>
<dbReference type="Pfam" id="PF01430">
    <property type="entry name" value="HSP33"/>
    <property type="match status" value="1"/>
</dbReference>
<dbReference type="PIRSF" id="PIRSF005261">
    <property type="entry name" value="Heat_shock_Hsp33"/>
    <property type="match status" value="1"/>
</dbReference>
<dbReference type="SUPFAM" id="SSF64397">
    <property type="entry name" value="Hsp33 domain"/>
    <property type="match status" value="1"/>
</dbReference>
<dbReference type="SUPFAM" id="SSF118352">
    <property type="entry name" value="HSP33 redox switch-like"/>
    <property type="match status" value="1"/>
</dbReference>
<accession>Q83J98</accession>
<accession>Q7UAS8</accession>
<keyword id="KW-0143">Chaperone</keyword>
<keyword id="KW-0963">Cytoplasm</keyword>
<keyword id="KW-1015">Disulfide bond</keyword>
<keyword id="KW-0676">Redox-active center</keyword>
<keyword id="KW-1185">Reference proteome</keyword>
<keyword id="KW-0862">Zinc</keyword>
<name>HSLO_SHIFL</name>
<proteinExistence type="inferred from homology"/>
<protein>
    <recommendedName>
        <fullName evidence="1">33 kDa chaperonin</fullName>
    </recommendedName>
    <alternativeName>
        <fullName evidence="1">Heat shock protein 33 homolog</fullName>
        <shortName evidence="1">HSP33</shortName>
    </alternativeName>
</protein>
<evidence type="ECO:0000255" key="1">
    <source>
        <dbReference type="HAMAP-Rule" id="MF_00117"/>
    </source>
</evidence>